<sequence length="69" mass="7769">MLSSRTSSIILILAILVAIMAVAQCRNIQYDVEEMTPEAAFRYAQWGEIPHKRVPSAGDMMVRFGKRSI</sequence>
<dbReference type="EMBL" id="AY821517">
    <property type="protein sequence ID" value="AAW78866.1"/>
    <property type="molecule type" value="mRNA"/>
</dbReference>
<dbReference type="EMBL" id="FO080637">
    <property type="protein sequence ID" value="CCD65361.1"/>
    <property type="molecule type" value="Genomic_DNA"/>
</dbReference>
<dbReference type="PIR" id="T32261">
    <property type="entry name" value="T32261"/>
</dbReference>
<dbReference type="RefSeq" id="NP_497243.3">
    <property type="nucleotide sequence ID" value="NM_064842.6"/>
</dbReference>
<dbReference type="BioGRID" id="47666">
    <property type="interactions" value="2"/>
</dbReference>
<dbReference type="FunCoup" id="O17058">
    <property type="interactions" value="811"/>
</dbReference>
<dbReference type="STRING" id="6239.C24A1.1.2"/>
<dbReference type="PaxDb" id="6239-C24A1.1"/>
<dbReference type="EnsemblMetazoa" id="C24A1.1.1">
    <property type="protein sequence ID" value="C24A1.1.1"/>
    <property type="gene ID" value="WBGene00016028"/>
</dbReference>
<dbReference type="GeneID" id="182824"/>
<dbReference type="KEGG" id="cel:CELE_C24A1.1"/>
<dbReference type="UCSC" id="C24A1.1.1">
    <property type="organism name" value="c. elegans"/>
</dbReference>
<dbReference type="AGR" id="WB:WBGene00016028"/>
<dbReference type="CTD" id="182824"/>
<dbReference type="WormBase" id="C24A1.1">
    <property type="protein sequence ID" value="CE38488"/>
    <property type="gene ID" value="WBGene00016028"/>
    <property type="gene designation" value="flp-24"/>
</dbReference>
<dbReference type="eggNOG" id="KOG3216">
    <property type="taxonomic scope" value="Eukaryota"/>
</dbReference>
<dbReference type="HOGENOM" id="CLU_2833461_0_0_1"/>
<dbReference type="InParanoid" id="O17058"/>
<dbReference type="OMA" id="AQWGEIP"/>
<dbReference type="OrthoDB" id="5818620at2759"/>
<dbReference type="PRO" id="PR:O17058"/>
<dbReference type="Proteomes" id="UP000001940">
    <property type="component" value="Chromosome III"/>
</dbReference>
<dbReference type="Bgee" id="WBGene00016028">
    <property type="expression patterns" value="Expressed in larva and 3 other cell types or tissues"/>
</dbReference>
<dbReference type="GO" id="GO:0005576">
    <property type="term" value="C:extracellular region"/>
    <property type="evidence" value="ECO:0007669"/>
    <property type="project" value="UniProtKB-SubCell"/>
</dbReference>
<dbReference type="GO" id="GO:0007218">
    <property type="term" value="P:neuropeptide signaling pathway"/>
    <property type="evidence" value="ECO:0007669"/>
    <property type="project" value="UniProtKB-KW"/>
</dbReference>
<name>FLP24_CAEEL</name>
<organism>
    <name type="scientific">Caenorhabditis elegans</name>
    <dbReference type="NCBI Taxonomy" id="6239"/>
    <lineage>
        <taxon>Eukaryota</taxon>
        <taxon>Metazoa</taxon>
        <taxon>Ecdysozoa</taxon>
        <taxon>Nematoda</taxon>
        <taxon>Chromadorea</taxon>
        <taxon>Rhabditida</taxon>
        <taxon>Rhabditina</taxon>
        <taxon>Rhabditomorpha</taxon>
        <taxon>Rhabditoidea</taxon>
        <taxon>Rhabditidae</taxon>
        <taxon>Peloderinae</taxon>
        <taxon>Caenorhabditis</taxon>
    </lineage>
</organism>
<evidence type="ECO:0000255" key="1"/>
<evidence type="ECO:0000269" key="2">
    <source>
    </source>
</evidence>
<evidence type="ECO:0000269" key="3">
    <source>
    </source>
</evidence>
<evidence type="ECO:0000305" key="4"/>
<evidence type="ECO:0000312" key="5">
    <source>
        <dbReference type="EMBL" id="AAW78866.1"/>
    </source>
</evidence>
<evidence type="ECO:0000312" key="6">
    <source>
        <dbReference type="WormBase" id="C24A1.1"/>
    </source>
</evidence>
<keyword id="KW-0027">Amidation</keyword>
<keyword id="KW-0165">Cleavage on pair of basic residues</keyword>
<keyword id="KW-0903">Direct protein sequencing</keyword>
<keyword id="KW-0527">Neuropeptide</keyword>
<keyword id="KW-1185">Reference proteome</keyword>
<keyword id="KW-0964">Secreted</keyword>
<keyword id="KW-0732">Signal</keyword>
<gene>
    <name evidence="6" type="primary">flp-24</name>
    <name type="ORF">C24A1.1</name>
</gene>
<reference evidence="5" key="1">
    <citation type="submission" date="2004-11" db="EMBL/GenBank/DDBJ databases">
        <title>Characterization of flp-24 homologs in Ascaris suum and Caenorhabditis elegans.</title>
        <authorList>
            <person name="McVeigh P."/>
            <person name="Marks N.J."/>
            <person name="Maule A.G."/>
        </authorList>
    </citation>
    <scope>NUCLEOTIDE SEQUENCE [MRNA]</scope>
    <source>
        <strain evidence="5">Bristol N2</strain>
    </source>
</reference>
<reference key="2">
    <citation type="journal article" date="1998" name="Science">
        <title>Genome sequence of the nematode C. elegans: a platform for investigating biology.</title>
        <authorList>
            <consortium name="The C. elegans sequencing consortium"/>
        </authorList>
    </citation>
    <scope>NUCLEOTIDE SEQUENCE [LARGE SCALE GENOMIC DNA]</scope>
    <source>
        <strain>Bristol N2</strain>
    </source>
</reference>
<reference evidence="4" key="3">
    <citation type="journal article" date="2005" name="Biochem. Biophys. Res. Commun.">
        <title>Discovering neuropeptides in Caenorhabditis elegans by two dimensional liquid chromatography and mass spectrometry.</title>
        <authorList>
            <person name="Husson S.J."/>
            <person name="Clynen E."/>
            <person name="Baggerman G."/>
            <person name="De Loof A."/>
            <person name="Schoofs L."/>
        </authorList>
    </citation>
    <scope>PROTEIN SEQUENCE OF 54-64</scope>
    <scope>AMIDATION AT PHE-64</scope>
    <source>
        <strain evidence="2">Bristol N2</strain>
    </source>
</reference>
<reference key="4">
    <citation type="journal article" date="2005" name="Int. J. Parasitol.">
        <title>Analysis of FMRFamide-like peptide (FLP) diversity in phylum Nematoda.</title>
        <authorList>
            <person name="McVeigh P."/>
            <person name="Leech S."/>
            <person name="Mair G.R."/>
            <person name="Marks N.J."/>
            <person name="Geary T.G."/>
            <person name="Maule A.G."/>
        </authorList>
    </citation>
    <scope>IDENTIFICATION</scope>
</reference>
<reference evidence="4" key="5">
    <citation type="journal article" date="2016" name="Curr. Biol.">
        <title>C. elegans Stress-Induced Sleep Emerges from the Collective Action of Multiple Neuropeptides.</title>
        <authorList>
            <person name="Nath R.D."/>
            <person name="Chow E.S."/>
            <person name="Wang H."/>
            <person name="Schwarz E.M."/>
            <person name="Sternberg P.W."/>
        </authorList>
    </citation>
    <scope>FUNCTION</scope>
    <scope>DEVELOPMENTAL STAGE</scope>
</reference>
<protein>
    <recommendedName>
        <fullName>FMRFamide-like neuropeptides 24</fullName>
    </recommendedName>
    <component>
        <recommendedName>
            <fullName>VPSAGDMMVRF-amide</fullName>
        </recommendedName>
    </component>
</protein>
<accession>O17058</accession>
<accession>Q5ENY7</accession>
<comment type="function">
    <text evidence="3">Probable FMRFamide-like neuropeptides (PubMed:27546573). Plays a role in behaviors associated with a sleep-like state induced by stress (SIS), acting in concert with the FMRFamide related peptide flp-13 and neuropeptide-like protein nlp-8 (PubMed:27546573).</text>
</comment>
<comment type="subcellular location">
    <subcellularLocation>
        <location evidence="4">Secreted</location>
    </subcellularLocation>
</comment>
<comment type="developmental stage">
    <text evidence="3">Expressed in the ALA neuron in L4 stage larvae.</text>
</comment>
<comment type="similarity">
    <text evidence="2">Belongs to the FARP (FMRFamide related peptide) family.</text>
</comment>
<proteinExistence type="evidence at protein level"/>
<feature type="signal peptide" evidence="1">
    <location>
        <begin position="1"/>
        <end position="25"/>
    </location>
</feature>
<feature type="propeptide" id="PRO_0000312083" evidence="1">
    <location>
        <begin position="26"/>
        <end position="51"/>
    </location>
</feature>
<feature type="peptide" id="PRO_0000312084" description="VPSAGDMMVRF-amide" evidence="2">
    <location>
        <begin position="54"/>
        <end position="64"/>
    </location>
</feature>
<feature type="propeptide" id="PRO_0000312085" evidence="1">
    <location>
        <begin position="68"/>
        <end position="69"/>
    </location>
</feature>
<feature type="modified residue" description="Phenylalanine amide" evidence="2">
    <location>
        <position position="64"/>
    </location>
</feature>